<gene>
    <name evidence="1" type="primary">rplT</name>
    <name type="ordered locus">XfasM23_2017</name>
</gene>
<name>RL20_XYLF2</name>
<sequence>MARVKRGVQARRRHKKILSLAKGYYNARRKVFRVAKQAVIKAQQYAYIGRKQKKRNFRSLWIVRINAAARMNGLSYSRFMNGILKCGITLDRKMLADIAVHDPAGFTALAEKAKTMLAA</sequence>
<comment type="function">
    <text evidence="1">Binds directly to 23S ribosomal RNA and is necessary for the in vitro assembly process of the 50S ribosomal subunit. It is not involved in the protein synthesizing functions of that subunit.</text>
</comment>
<comment type="similarity">
    <text evidence="1">Belongs to the bacterial ribosomal protein bL20 family.</text>
</comment>
<dbReference type="EMBL" id="CP001011">
    <property type="protein sequence ID" value="ACB93416.1"/>
    <property type="molecule type" value="Genomic_DNA"/>
</dbReference>
<dbReference type="RefSeq" id="WP_004090404.1">
    <property type="nucleotide sequence ID" value="NC_010577.1"/>
</dbReference>
<dbReference type="SMR" id="B2I9P5"/>
<dbReference type="GeneID" id="93905773"/>
<dbReference type="KEGG" id="xfn:XfasM23_2017"/>
<dbReference type="HOGENOM" id="CLU_123265_0_1_6"/>
<dbReference type="Proteomes" id="UP000001698">
    <property type="component" value="Chromosome"/>
</dbReference>
<dbReference type="GO" id="GO:1990904">
    <property type="term" value="C:ribonucleoprotein complex"/>
    <property type="evidence" value="ECO:0007669"/>
    <property type="project" value="UniProtKB-KW"/>
</dbReference>
<dbReference type="GO" id="GO:0005840">
    <property type="term" value="C:ribosome"/>
    <property type="evidence" value="ECO:0007669"/>
    <property type="project" value="UniProtKB-KW"/>
</dbReference>
<dbReference type="GO" id="GO:0019843">
    <property type="term" value="F:rRNA binding"/>
    <property type="evidence" value="ECO:0007669"/>
    <property type="project" value="UniProtKB-UniRule"/>
</dbReference>
<dbReference type="GO" id="GO:0003735">
    <property type="term" value="F:structural constituent of ribosome"/>
    <property type="evidence" value="ECO:0007669"/>
    <property type="project" value="InterPro"/>
</dbReference>
<dbReference type="GO" id="GO:0000027">
    <property type="term" value="P:ribosomal large subunit assembly"/>
    <property type="evidence" value="ECO:0007669"/>
    <property type="project" value="UniProtKB-UniRule"/>
</dbReference>
<dbReference type="GO" id="GO:0006412">
    <property type="term" value="P:translation"/>
    <property type="evidence" value="ECO:0007669"/>
    <property type="project" value="InterPro"/>
</dbReference>
<dbReference type="CDD" id="cd07026">
    <property type="entry name" value="Ribosomal_L20"/>
    <property type="match status" value="1"/>
</dbReference>
<dbReference type="FunFam" id="1.10.1900.20:FF:000001">
    <property type="entry name" value="50S ribosomal protein L20"/>
    <property type="match status" value="1"/>
</dbReference>
<dbReference type="Gene3D" id="6.10.160.10">
    <property type="match status" value="1"/>
</dbReference>
<dbReference type="Gene3D" id="1.10.1900.20">
    <property type="entry name" value="Ribosomal protein L20"/>
    <property type="match status" value="1"/>
</dbReference>
<dbReference type="HAMAP" id="MF_00382">
    <property type="entry name" value="Ribosomal_bL20"/>
    <property type="match status" value="1"/>
</dbReference>
<dbReference type="InterPro" id="IPR005813">
    <property type="entry name" value="Ribosomal_bL20"/>
</dbReference>
<dbReference type="InterPro" id="IPR049946">
    <property type="entry name" value="RIBOSOMAL_L20_CS"/>
</dbReference>
<dbReference type="InterPro" id="IPR035566">
    <property type="entry name" value="Ribosomal_protein_bL20_C"/>
</dbReference>
<dbReference type="NCBIfam" id="TIGR01032">
    <property type="entry name" value="rplT_bact"/>
    <property type="match status" value="1"/>
</dbReference>
<dbReference type="PANTHER" id="PTHR10986">
    <property type="entry name" value="39S RIBOSOMAL PROTEIN L20"/>
    <property type="match status" value="1"/>
</dbReference>
<dbReference type="Pfam" id="PF00453">
    <property type="entry name" value="Ribosomal_L20"/>
    <property type="match status" value="1"/>
</dbReference>
<dbReference type="PRINTS" id="PR00062">
    <property type="entry name" value="RIBOSOMALL20"/>
</dbReference>
<dbReference type="SUPFAM" id="SSF74731">
    <property type="entry name" value="Ribosomal protein L20"/>
    <property type="match status" value="1"/>
</dbReference>
<dbReference type="PROSITE" id="PS00937">
    <property type="entry name" value="RIBOSOMAL_L20"/>
    <property type="match status" value="1"/>
</dbReference>
<keyword id="KW-0687">Ribonucleoprotein</keyword>
<keyword id="KW-0689">Ribosomal protein</keyword>
<keyword id="KW-0694">RNA-binding</keyword>
<keyword id="KW-0699">rRNA-binding</keyword>
<organism>
    <name type="scientific">Xylella fastidiosa (strain M23)</name>
    <dbReference type="NCBI Taxonomy" id="405441"/>
    <lineage>
        <taxon>Bacteria</taxon>
        <taxon>Pseudomonadati</taxon>
        <taxon>Pseudomonadota</taxon>
        <taxon>Gammaproteobacteria</taxon>
        <taxon>Lysobacterales</taxon>
        <taxon>Lysobacteraceae</taxon>
        <taxon>Xylella</taxon>
    </lineage>
</organism>
<accession>B2I9P5</accession>
<proteinExistence type="inferred from homology"/>
<reference key="1">
    <citation type="journal article" date="2010" name="J. Bacteriol.">
        <title>Whole genome sequences of two Xylella fastidiosa strains (M12 and M23) causing almond leaf scorch disease in California.</title>
        <authorList>
            <person name="Chen J."/>
            <person name="Xie G."/>
            <person name="Han S."/>
            <person name="Chertkov O."/>
            <person name="Sims D."/>
            <person name="Civerolo E.L."/>
        </authorList>
    </citation>
    <scope>NUCLEOTIDE SEQUENCE [LARGE SCALE GENOMIC DNA]</scope>
    <source>
        <strain>M23</strain>
    </source>
</reference>
<evidence type="ECO:0000255" key="1">
    <source>
        <dbReference type="HAMAP-Rule" id="MF_00382"/>
    </source>
</evidence>
<evidence type="ECO:0000305" key="2"/>
<protein>
    <recommendedName>
        <fullName evidence="1">Large ribosomal subunit protein bL20</fullName>
    </recommendedName>
    <alternativeName>
        <fullName evidence="2">50S ribosomal protein L20</fullName>
    </alternativeName>
</protein>
<feature type="chain" id="PRO_1000122395" description="Large ribosomal subunit protein bL20">
    <location>
        <begin position="1"/>
        <end position="119"/>
    </location>
</feature>